<proteinExistence type="inferred from homology"/>
<accession>Q3JZV8</accession>
<comment type="function">
    <text evidence="1">Phosphorylation of dTMP to form dTDP in both de novo and salvage pathways of dTTP synthesis.</text>
</comment>
<comment type="catalytic activity">
    <reaction evidence="1">
        <text>dTMP + ATP = dTDP + ADP</text>
        <dbReference type="Rhea" id="RHEA:13517"/>
        <dbReference type="ChEBI" id="CHEBI:30616"/>
        <dbReference type="ChEBI" id="CHEBI:58369"/>
        <dbReference type="ChEBI" id="CHEBI:63528"/>
        <dbReference type="ChEBI" id="CHEBI:456216"/>
        <dbReference type="EC" id="2.7.4.9"/>
    </reaction>
</comment>
<comment type="similarity">
    <text evidence="1">Belongs to the thymidylate kinase family.</text>
</comment>
<feature type="chain" id="PRO_1000023293" description="Thymidylate kinase">
    <location>
        <begin position="1"/>
        <end position="211"/>
    </location>
</feature>
<feature type="binding site" evidence="1">
    <location>
        <begin position="11"/>
        <end position="18"/>
    </location>
    <ligand>
        <name>ATP</name>
        <dbReference type="ChEBI" id="CHEBI:30616"/>
    </ligand>
</feature>
<organism>
    <name type="scientific">Streptococcus agalactiae serotype Ia (strain ATCC 27591 / A909 / CDC SS700)</name>
    <dbReference type="NCBI Taxonomy" id="205921"/>
    <lineage>
        <taxon>Bacteria</taxon>
        <taxon>Bacillati</taxon>
        <taxon>Bacillota</taxon>
        <taxon>Bacilli</taxon>
        <taxon>Lactobacillales</taxon>
        <taxon>Streptococcaceae</taxon>
        <taxon>Streptococcus</taxon>
    </lineage>
</organism>
<gene>
    <name evidence="1" type="primary">tmk</name>
    <name type="ordered locus">SAK_1591</name>
</gene>
<keyword id="KW-0067">ATP-binding</keyword>
<keyword id="KW-0418">Kinase</keyword>
<keyword id="KW-0545">Nucleotide biosynthesis</keyword>
<keyword id="KW-0547">Nucleotide-binding</keyword>
<keyword id="KW-0808">Transferase</keyword>
<reference key="1">
    <citation type="journal article" date="2005" name="Proc. Natl. Acad. Sci. U.S.A.">
        <title>Genome analysis of multiple pathogenic isolates of Streptococcus agalactiae: implications for the microbial 'pan-genome'.</title>
        <authorList>
            <person name="Tettelin H."/>
            <person name="Masignani V."/>
            <person name="Cieslewicz M.J."/>
            <person name="Donati C."/>
            <person name="Medini D."/>
            <person name="Ward N.L."/>
            <person name="Angiuoli S.V."/>
            <person name="Crabtree J."/>
            <person name="Jones A.L."/>
            <person name="Durkin A.S."/>
            <person name="DeBoy R.T."/>
            <person name="Davidsen T.M."/>
            <person name="Mora M."/>
            <person name="Scarselli M."/>
            <person name="Margarit y Ros I."/>
            <person name="Peterson J.D."/>
            <person name="Hauser C.R."/>
            <person name="Sundaram J.P."/>
            <person name="Nelson W.C."/>
            <person name="Madupu R."/>
            <person name="Brinkac L.M."/>
            <person name="Dodson R.J."/>
            <person name="Rosovitz M.J."/>
            <person name="Sullivan S.A."/>
            <person name="Daugherty S.C."/>
            <person name="Haft D.H."/>
            <person name="Selengut J."/>
            <person name="Gwinn M.L."/>
            <person name="Zhou L."/>
            <person name="Zafar N."/>
            <person name="Khouri H."/>
            <person name="Radune D."/>
            <person name="Dimitrov G."/>
            <person name="Watkins K."/>
            <person name="O'Connor K.J."/>
            <person name="Smith S."/>
            <person name="Utterback T.R."/>
            <person name="White O."/>
            <person name="Rubens C.E."/>
            <person name="Grandi G."/>
            <person name="Madoff L.C."/>
            <person name="Kasper D.L."/>
            <person name="Telford J.L."/>
            <person name="Wessels M.R."/>
            <person name="Rappuoli R."/>
            <person name="Fraser C.M."/>
        </authorList>
    </citation>
    <scope>NUCLEOTIDE SEQUENCE [LARGE SCALE GENOMIC DNA]</scope>
    <source>
        <strain>ATCC 27591 / A909 / CDC SS700</strain>
    </source>
</reference>
<sequence>MKKGLMISFEGPDGAGKTTVLEAVLPLLREKLSQDILTTREPGGVTISEEIRHIILDVKHTQMDKKTELLLYMAARRQHLVEKVLPALEEGKIVLMDRFIDSSVAYQGSGRGLDKSHIKWLNDYATDSHKPDLTLYFDVPSEVGLERIQKSVQREVNRLDLEQLDMHQRVRQGYLELADSEPNRIVTIDASQQLDEVIAETFSIILDRINQ</sequence>
<protein>
    <recommendedName>
        <fullName evidence="1">Thymidylate kinase</fullName>
        <ecNumber evidence="1">2.7.4.9</ecNumber>
    </recommendedName>
    <alternativeName>
        <fullName evidence="1">dTMP kinase</fullName>
    </alternativeName>
</protein>
<dbReference type="EC" id="2.7.4.9" evidence="1"/>
<dbReference type="EMBL" id="CP000114">
    <property type="protein sequence ID" value="ABA44728.1"/>
    <property type="molecule type" value="Genomic_DNA"/>
</dbReference>
<dbReference type="RefSeq" id="WP_000715592.1">
    <property type="nucleotide sequence ID" value="NC_007432.1"/>
</dbReference>
<dbReference type="SMR" id="Q3JZV8"/>
<dbReference type="GeneID" id="66886422"/>
<dbReference type="KEGG" id="sak:SAK_1591"/>
<dbReference type="HOGENOM" id="CLU_049131_0_2_9"/>
<dbReference type="GO" id="GO:0005829">
    <property type="term" value="C:cytosol"/>
    <property type="evidence" value="ECO:0007669"/>
    <property type="project" value="TreeGrafter"/>
</dbReference>
<dbReference type="GO" id="GO:0005524">
    <property type="term" value="F:ATP binding"/>
    <property type="evidence" value="ECO:0007669"/>
    <property type="project" value="UniProtKB-UniRule"/>
</dbReference>
<dbReference type="GO" id="GO:0004798">
    <property type="term" value="F:dTMP kinase activity"/>
    <property type="evidence" value="ECO:0007669"/>
    <property type="project" value="UniProtKB-UniRule"/>
</dbReference>
<dbReference type="GO" id="GO:0006233">
    <property type="term" value="P:dTDP biosynthetic process"/>
    <property type="evidence" value="ECO:0007669"/>
    <property type="project" value="InterPro"/>
</dbReference>
<dbReference type="GO" id="GO:0006235">
    <property type="term" value="P:dTTP biosynthetic process"/>
    <property type="evidence" value="ECO:0007669"/>
    <property type="project" value="UniProtKB-UniRule"/>
</dbReference>
<dbReference type="GO" id="GO:0006227">
    <property type="term" value="P:dUDP biosynthetic process"/>
    <property type="evidence" value="ECO:0007669"/>
    <property type="project" value="TreeGrafter"/>
</dbReference>
<dbReference type="CDD" id="cd01672">
    <property type="entry name" value="TMPK"/>
    <property type="match status" value="1"/>
</dbReference>
<dbReference type="FunFam" id="3.40.50.300:FF:000225">
    <property type="entry name" value="Thymidylate kinase"/>
    <property type="match status" value="1"/>
</dbReference>
<dbReference type="Gene3D" id="3.40.50.300">
    <property type="entry name" value="P-loop containing nucleotide triphosphate hydrolases"/>
    <property type="match status" value="1"/>
</dbReference>
<dbReference type="HAMAP" id="MF_00165">
    <property type="entry name" value="Thymidylate_kinase"/>
    <property type="match status" value="1"/>
</dbReference>
<dbReference type="InterPro" id="IPR027417">
    <property type="entry name" value="P-loop_NTPase"/>
</dbReference>
<dbReference type="InterPro" id="IPR039430">
    <property type="entry name" value="Thymidylate_kin-like_dom"/>
</dbReference>
<dbReference type="InterPro" id="IPR018095">
    <property type="entry name" value="Thymidylate_kin_CS"/>
</dbReference>
<dbReference type="InterPro" id="IPR018094">
    <property type="entry name" value="Thymidylate_kinase"/>
</dbReference>
<dbReference type="NCBIfam" id="TIGR00041">
    <property type="entry name" value="DTMP_kinase"/>
    <property type="match status" value="1"/>
</dbReference>
<dbReference type="PANTHER" id="PTHR10344">
    <property type="entry name" value="THYMIDYLATE KINASE"/>
    <property type="match status" value="1"/>
</dbReference>
<dbReference type="PANTHER" id="PTHR10344:SF4">
    <property type="entry name" value="UMP-CMP KINASE 2, MITOCHONDRIAL"/>
    <property type="match status" value="1"/>
</dbReference>
<dbReference type="Pfam" id="PF02223">
    <property type="entry name" value="Thymidylate_kin"/>
    <property type="match status" value="1"/>
</dbReference>
<dbReference type="SUPFAM" id="SSF52540">
    <property type="entry name" value="P-loop containing nucleoside triphosphate hydrolases"/>
    <property type="match status" value="1"/>
</dbReference>
<dbReference type="PROSITE" id="PS01331">
    <property type="entry name" value="THYMIDYLATE_KINASE"/>
    <property type="match status" value="1"/>
</dbReference>
<evidence type="ECO:0000255" key="1">
    <source>
        <dbReference type="HAMAP-Rule" id="MF_00165"/>
    </source>
</evidence>
<name>KTHY_STRA1</name>